<reference key="1">
    <citation type="journal article" date="2003" name="J. Biol. Chem.">
        <title>Equilibrative nucleoside transporters of Arabidopsis thaliana. cDNA cloning, expression pattern, and analysis of transport activities.</title>
        <authorList>
            <person name="Li G."/>
            <person name="Liu K."/>
            <person name="Baldwin S.A."/>
            <person name="Wang D."/>
        </authorList>
    </citation>
    <scope>NUCLEOTIDE SEQUENCE [MRNA]</scope>
    <scope>TISSUE SPECIFICITY</scope>
    <scope>INDUCTION</scope>
</reference>
<reference key="2">
    <citation type="journal article" date="1999" name="Nature">
        <title>Sequence and analysis of chromosome 4 of the plant Arabidopsis thaliana.</title>
        <authorList>
            <person name="Mayer K.F.X."/>
            <person name="Schueller C."/>
            <person name="Wambutt R."/>
            <person name="Murphy G."/>
            <person name="Volckaert G."/>
            <person name="Pohl T."/>
            <person name="Duesterhoeft A."/>
            <person name="Stiekema W."/>
            <person name="Entian K.-D."/>
            <person name="Terryn N."/>
            <person name="Harris B."/>
            <person name="Ansorge W."/>
            <person name="Brandt P."/>
            <person name="Grivell L.A."/>
            <person name="Rieger M."/>
            <person name="Weichselgartner M."/>
            <person name="de Simone V."/>
            <person name="Obermaier B."/>
            <person name="Mache R."/>
            <person name="Mueller M."/>
            <person name="Kreis M."/>
            <person name="Delseny M."/>
            <person name="Puigdomenech P."/>
            <person name="Watson M."/>
            <person name="Schmidtheini T."/>
            <person name="Reichert B."/>
            <person name="Portetelle D."/>
            <person name="Perez-Alonso M."/>
            <person name="Boutry M."/>
            <person name="Bancroft I."/>
            <person name="Vos P."/>
            <person name="Hoheisel J."/>
            <person name="Zimmermann W."/>
            <person name="Wedler H."/>
            <person name="Ridley P."/>
            <person name="Langham S.-A."/>
            <person name="McCullagh B."/>
            <person name="Bilham L."/>
            <person name="Robben J."/>
            <person name="van der Schueren J."/>
            <person name="Grymonprez B."/>
            <person name="Chuang Y.-J."/>
            <person name="Vandenbussche F."/>
            <person name="Braeken M."/>
            <person name="Weltjens I."/>
            <person name="Voet M."/>
            <person name="Bastiaens I."/>
            <person name="Aert R."/>
            <person name="Defoor E."/>
            <person name="Weitzenegger T."/>
            <person name="Bothe G."/>
            <person name="Ramsperger U."/>
            <person name="Hilbert H."/>
            <person name="Braun M."/>
            <person name="Holzer E."/>
            <person name="Brandt A."/>
            <person name="Peters S."/>
            <person name="van Staveren M."/>
            <person name="Dirkse W."/>
            <person name="Mooijman P."/>
            <person name="Klein Lankhorst R."/>
            <person name="Rose M."/>
            <person name="Hauf J."/>
            <person name="Koetter P."/>
            <person name="Berneiser S."/>
            <person name="Hempel S."/>
            <person name="Feldpausch M."/>
            <person name="Lamberth S."/>
            <person name="Van den Daele H."/>
            <person name="De Keyser A."/>
            <person name="Buysshaert C."/>
            <person name="Gielen J."/>
            <person name="Villarroel R."/>
            <person name="De Clercq R."/>
            <person name="van Montagu M."/>
            <person name="Rogers J."/>
            <person name="Cronin A."/>
            <person name="Quail M.A."/>
            <person name="Bray-Allen S."/>
            <person name="Clark L."/>
            <person name="Doggett J."/>
            <person name="Hall S."/>
            <person name="Kay M."/>
            <person name="Lennard N."/>
            <person name="McLay K."/>
            <person name="Mayes R."/>
            <person name="Pettett A."/>
            <person name="Rajandream M.A."/>
            <person name="Lyne M."/>
            <person name="Benes V."/>
            <person name="Rechmann S."/>
            <person name="Borkova D."/>
            <person name="Bloecker H."/>
            <person name="Scharfe M."/>
            <person name="Grimm M."/>
            <person name="Loehnert T.-H."/>
            <person name="Dose S."/>
            <person name="de Haan M."/>
            <person name="Maarse A.C."/>
            <person name="Schaefer M."/>
            <person name="Mueller-Auer S."/>
            <person name="Gabel C."/>
            <person name="Fuchs M."/>
            <person name="Fartmann B."/>
            <person name="Granderath K."/>
            <person name="Dauner D."/>
            <person name="Herzl A."/>
            <person name="Neumann S."/>
            <person name="Argiriou A."/>
            <person name="Vitale D."/>
            <person name="Liguori R."/>
            <person name="Piravandi E."/>
            <person name="Massenet O."/>
            <person name="Quigley F."/>
            <person name="Clabauld G."/>
            <person name="Muendlein A."/>
            <person name="Felber R."/>
            <person name="Schnabl S."/>
            <person name="Hiller R."/>
            <person name="Schmidt W."/>
            <person name="Lecharny A."/>
            <person name="Aubourg S."/>
            <person name="Chefdor F."/>
            <person name="Cooke R."/>
            <person name="Berger C."/>
            <person name="Monfort A."/>
            <person name="Casacuberta E."/>
            <person name="Gibbons T."/>
            <person name="Weber N."/>
            <person name="Vandenbol M."/>
            <person name="Bargues M."/>
            <person name="Terol J."/>
            <person name="Torres A."/>
            <person name="Perez-Perez A."/>
            <person name="Purnelle B."/>
            <person name="Bent E."/>
            <person name="Johnson S."/>
            <person name="Tacon D."/>
            <person name="Jesse T."/>
            <person name="Heijnen L."/>
            <person name="Schwarz S."/>
            <person name="Scholler P."/>
            <person name="Heber S."/>
            <person name="Francs P."/>
            <person name="Bielke C."/>
            <person name="Frishman D."/>
            <person name="Haase D."/>
            <person name="Lemcke K."/>
            <person name="Mewes H.-W."/>
            <person name="Stocker S."/>
            <person name="Zaccaria P."/>
            <person name="Bevan M."/>
            <person name="Wilson R.K."/>
            <person name="de la Bastide M."/>
            <person name="Habermann K."/>
            <person name="Parnell L."/>
            <person name="Dedhia N."/>
            <person name="Gnoj L."/>
            <person name="Schutz K."/>
            <person name="Huang E."/>
            <person name="Spiegel L."/>
            <person name="Sekhon M."/>
            <person name="Murray J."/>
            <person name="Sheet P."/>
            <person name="Cordes M."/>
            <person name="Abu-Threideh J."/>
            <person name="Stoneking T."/>
            <person name="Kalicki J."/>
            <person name="Graves T."/>
            <person name="Harmon G."/>
            <person name="Edwards J."/>
            <person name="Latreille P."/>
            <person name="Courtney L."/>
            <person name="Cloud J."/>
            <person name="Abbott A."/>
            <person name="Scott K."/>
            <person name="Johnson D."/>
            <person name="Minx P."/>
            <person name="Bentley D."/>
            <person name="Fulton B."/>
            <person name="Miller N."/>
            <person name="Greco T."/>
            <person name="Kemp K."/>
            <person name="Kramer J."/>
            <person name="Fulton L."/>
            <person name="Mardis E."/>
            <person name="Dante M."/>
            <person name="Pepin K."/>
            <person name="Hillier L.W."/>
            <person name="Nelson J."/>
            <person name="Spieth J."/>
            <person name="Ryan E."/>
            <person name="Andrews S."/>
            <person name="Geisel C."/>
            <person name="Layman D."/>
            <person name="Du H."/>
            <person name="Ali J."/>
            <person name="Berghoff A."/>
            <person name="Jones K."/>
            <person name="Drone K."/>
            <person name="Cotton M."/>
            <person name="Joshu C."/>
            <person name="Antonoiu B."/>
            <person name="Zidanic M."/>
            <person name="Strong C."/>
            <person name="Sun H."/>
            <person name="Lamar B."/>
            <person name="Yordan C."/>
            <person name="Ma P."/>
            <person name="Zhong J."/>
            <person name="Preston R."/>
            <person name="Vil D."/>
            <person name="Shekher M."/>
            <person name="Matero A."/>
            <person name="Shah R."/>
            <person name="Swaby I.K."/>
            <person name="O'Shaughnessy A."/>
            <person name="Rodriguez M."/>
            <person name="Hoffman J."/>
            <person name="Till S."/>
            <person name="Granat S."/>
            <person name="Shohdy N."/>
            <person name="Hasegawa A."/>
            <person name="Hameed A."/>
            <person name="Lodhi M."/>
            <person name="Johnson A."/>
            <person name="Chen E."/>
            <person name="Marra M.A."/>
            <person name="Martienssen R."/>
            <person name="McCombie W.R."/>
        </authorList>
    </citation>
    <scope>NUCLEOTIDE SEQUENCE [LARGE SCALE GENOMIC DNA]</scope>
    <source>
        <strain>cv. Columbia</strain>
    </source>
</reference>
<reference key="3">
    <citation type="journal article" date="2017" name="Plant J.">
        <title>Araport11: a complete reannotation of the Arabidopsis thaliana reference genome.</title>
        <authorList>
            <person name="Cheng C.Y."/>
            <person name="Krishnakumar V."/>
            <person name="Chan A.P."/>
            <person name="Thibaud-Nissen F."/>
            <person name="Schobel S."/>
            <person name="Town C.D."/>
        </authorList>
    </citation>
    <scope>GENOME REANNOTATION</scope>
    <source>
        <strain>cv. Columbia</strain>
    </source>
</reference>
<reference key="4">
    <citation type="journal article" date="2004" name="Biochem. J.">
        <title>Characterization of three novel members of the Arabidopsis thaliana equilibrative nucleoside transporter (ENT) family.</title>
        <authorList>
            <person name="Wormit A."/>
            <person name="Traub M."/>
            <person name="Floerchinger M."/>
            <person name="Neuhaus H.E."/>
            <person name="Moehlmann T."/>
        </authorList>
    </citation>
    <scope>FUNCTION</scope>
    <scope>BIOPHYSICOCHEMICAL PROPERTIES</scope>
    <scope>SUBCELLULAR LOCATION</scope>
</reference>
<sequence length="418" mass="46225">MADIYEHQVPEKLRGKYQAMIVYCILGFGSLISWNSMLTTADYYYKVFPDYHPSRVLTLVYQPFAFGAIVILAYHESKTSTRKRNLIGYILYTISTFLLIVLDLATKGRGGFGPYTGLCAVVAAFGLADATVQGGMFGDLSLMCPELVQSYMGGMAVAGALTSALRLITKAAFEKSNNGLRKGAMMFLAISTCIELLSVMLYAYVLPKLPIVMYYRRKAASQGSKTVSADLAAAGIQNQSDLSDDDSKNQRLSKKELLFQNIDHAVNLFLIYVCTLSIFPGFLYENTGQHGLGAWYALVLVAMYNCWDLVGRYTPLVKWLNIENRKLITIAVLSRYLLIPAFYFTAKYGDQGWMIMLVSVLGLTNGHLTVCIMTIAPKGYKGPEQNALGNLLVIFLLGGIFAGVALDWLWLIGKKNAF</sequence>
<protein>
    <recommendedName>
        <fullName>Equilibrative nucleotide transporter 6</fullName>
        <shortName>AtENT6</shortName>
    </recommendedName>
    <alternativeName>
        <fullName>Nucleoside transporter ENT6</fullName>
    </alternativeName>
</protein>
<accession>Q944N8</accession>
<accession>Q9M0Y4</accession>
<dbReference type="EMBL" id="AF426402">
    <property type="protein sequence ID" value="AAL25098.1"/>
    <property type="molecule type" value="mRNA"/>
</dbReference>
<dbReference type="EMBL" id="AF162444">
    <property type="status" value="NOT_ANNOTATED_CDS"/>
    <property type="molecule type" value="Genomic_DNA"/>
</dbReference>
<dbReference type="EMBL" id="AL161502">
    <property type="protein sequence ID" value="CAB81053.1"/>
    <property type="status" value="ALT_SEQ"/>
    <property type="molecule type" value="Genomic_DNA"/>
</dbReference>
<dbReference type="EMBL" id="CP002687">
    <property type="protein sequence ID" value="AEE82480.1"/>
    <property type="molecule type" value="Genomic_DNA"/>
</dbReference>
<dbReference type="EMBL" id="CP002687">
    <property type="protein sequence ID" value="ANM67036.1"/>
    <property type="molecule type" value="Genomic_DNA"/>
</dbReference>
<dbReference type="PIR" id="C85064">
    <property type="entry name" value="C85064"/>
</dbReference>
<dbReference type="RefSeq" id="NP_001328891.1">
    <property type="nucleotide sequence ID" value="NM_001340533.1"/>
</dbReference>
<dbReference type="RefSeq" id="NP_192420.2">
    <property type="nucleotide sequence ID" value="NM_116750.4"/>
</dbReference>
<dbReference type="SMR" id="Q944N8"/>
<dbReference type="BioGRID" id="11167">
    <property type="interactions" value="1"/>
</dbReference>
<dbReference type="FunCoup" id="Q944N8">
    <property type="interactions" value="122"/>
</dbReference>
<dbReference type="IntAct" id="Q944N8">
    <property type="interactions" value="1"/>
</dbReference>
<dbReference type="STRING" id="3702.Q944N8"/>
<dbReference type="iPTMnet" id="Q944N8"/>
<dbReference type="PaxDb" id="3702-AT4G05110.1"/>
<dbReference type="ProteomicsDB" id="221899"/>
<dbReference type="EnsemblPlants" id="AT4G05110.1">
    <property type="protein sequence ID" value="AT4G05110.1"/>
    <property type="gene ID" value="AT4G05110"/>
</dbReference>
<dbReference type="EnsemblPlants" id="AT4G05110.3">
    <property type="protein sequence ID" value="AT4G05110.3"/>
    <property type="gene ID" value="AT4G05110"/>
</dbReference>
<dbReference type="GeneID" id="825856"/>
<dbReference type="Gramene" id="AT4G05110.1">
    <property type="protein sequence ID" value="AT4G05110.1"/>
    <property type="gene ID" value="AT4G05110"/>
</dbReference>
<dbReference type="Gramene" id="AT4G05110.3">
    <property type="protein sequence ID" value="AT4G05110.3"/>
    <property type="gene ID" value="AT4G05110"/>
</dbReference>
<dbReference type="KEGG" id="ath:AT4G05110"/>
<dbReference type="Araport" id="AT4G05110"/>
<dbReference type="TAIR" id="AT4G05110">
    <property type="gene designation" value="ENT6"/>
</dbReference>
<dbReference type="eggNOG" id="KOG1479">
    <property type="taxonomic scope" value="Eukaryota"/>
</dbReference>
<dbReference type="HOGENOM" id="CLU_021611_5_1_1"/>
<dbReference type="InParanoid" id="Q944N8"/>
<dbReference type="OMA" id="PNTNVEF"/>
<dbReference type="PhylomeDB" id="Q944N8"/>
<dbReference type="PRO" id="PR:Q944N8"/>
<dbReference type="Proteomes" id="UP000006548">
    <property type="component" value="Chromosome 4"/>
</dbReference>
<dbReference type="ExpressionAtlas" id="Q944N8">
    <property type="expression patterns" value="baseline and differential"/>
</dbReference>
<dbReference type="GO" id="GO:0005886">
    <property type="term" value="C:plasma membrane"/>
    <property type="evidence" value="ECO:0000314"/>
    <property type="project" value="UniProtKB"/>
</dbReference>
<dbReference type="GO" id="GO:0005337">
    <property type="term" value="F:nucleoside transmembrane transporter activity"/>
    <property type="evidence" value="ECO:0000314"/>
    <property type="project" value="UniProtKB"/>
</dbReference>
<dbReference type="GO" id="GO:0015858">
    <property type="term" value="P:nucleoside transport"/>
    <property type="evidence" value="ECO:0000314"/>
    <property type="project" value="UniProtKB"/>
</dbReference>
<dbReference type="InterPro" id="IPR002259">
    <property type="entry name" value="Eqnu_transpt"/>
</dbReference>
<dbReference type="InterPro" id="IPR036259">
    <property type="entry name" value="MFS_trans_sf"/>
</dbReference>
<dbReference type="PANTHER" id="PTHR10332">
    <property type="entry name" value="EQUILIBRATIVE NUCLEOSIDE TRANSPORTER"/>
    <property type="match status" value="1"/>
</dbReference>
<dbReference type="PANTHER" id="PTHR10332:SF38">
    <property type="entry name" value="EQUILIBRATIVE NUCLEOTIDE TRANSPORTER 3-RELATED"/>
    <property type="match status" value="1"/>
</dbReference>
<dbReference type="Pfam" id="PF01733">
    <property type="entry name" value="Nucleoside_tran"/>
    <property type="match status" value="1"/>
</dbReference>
<dbReference type="PIRSF" id="PIRSF016379">
    <property type="entry name" value="ENT"/>
    <property type="match status" value="1"/>
</dbReference>
<dbReference type="PRINTS" id="PR01130">
    <property type="entry name" value="DERENTRNSPRT"/>
</dbReference>
<dbReference type="SUPFAM" id="SSF103473">
    <property type="entry name" value="MFS general substrate transporter"/>
    <property type="match status" value="1"/>
</dbReference>
<organism>
    <name type="scientific">Arabidopsis thaliana</name>
    <name type="common">Mouse-ear cress</name>
    <dbReference type="NCBI Taxonomy" id="3702"/>
    <lineage>
        <taxon>Eukaryota</taxon>
        <taxon>Viridiplantae</taxon>
        <taxon>Streptophyta</taxon>
        <taxon>Embryophyta</taxon>
        <taxon>Tracheophyta</taxon>
        <taxon>Spermatophyta</taxon>
        <taxon>Magnoliopsida</taxon>
        <taxon>eudicotyledons</taxon>
        <taxon>Gunneridae</taxon>
        <taxon>Pentapetalae</taxon>
        <taxon>rosids</taxon>
        <taxon>malvids</taxon>
        <taxon>Brassicales</taxon>
        <taxon>Brassicaceae</taxon>
        <taxon>Camelineae</taxon>
        <taxon>Arabidopsis</taxon>
    </lineage>
</organism>
<evidence type="ECO:0000255" key="1"/>
<evidence type="ECO:0000269" key="2">
    <source>
    </source>
</evidence>
<evidence type="ECO:0000269" key="3">
    <source>
    </source>
</evidence>
<evidence type="ECO:0000305" key="4"/>
<evidence type="ECO:0000305" key="5">
    <source>
    </source>
</evidence>
<comment type="function">
    <text evidence="3">Nucleoside transporter that can mediate uptake of adenosine, uridine, guanosine or cytidine when expressed in a heterologous system (yeast).</text>
</comment>
<comment type="biophysicochemical properties">
    <kinetics>
        <KM evidence="3">3 uM for adenosine</KM>
        <KM evidence="3">6.4 uM for uridine</KM>
        <KM evidence="3">11.5 uM for guanosine</KM>
        <KM evidence="3">21.2 uM for cytidine</KM>
    </kinetics>
</comment>
<comment type="subcellular location">
    <subcellularLocation>
        <location evidence="5">Cell membrane</location>
        <topology evidence="5">Multi-pass membrane protein</topology>
    </subcellularLocation>
    <text>Plasma membrane.</text>
</comment>
<comment type="tissue specificity">
    <text evidence="2">Expressed in leaves and siliques.</text>
</comment>
<comment type="induction">
    <text evidence="2">By nitrogen deficiency and 5-fluorouracil plus methotrexate.</text>
</comment>
<comment type="similarity">
    <text evidence="4">Belongs to the SLC29A/ENT transporter (TC 2.A.57) family.</text>
</comment>
<comment type="sequence caution" evidence="4">
    <conflict type="erroneous gene model prediction">
        <sequence resource="EMBL-CDS" id="CAB81053"/>
    </conflict>
</comment>
<keyword id="KW-1003">Cell membrane</keyword>
<keyword id="KW-0472">Membrane</keyword>
<keyword id="KW-1185">Reference proteome</keyword>
<keyword id="KW-0812">Transmembrane</keyword>
<keyword id="KW-1133">Transmembrane helix</keyword>
<keyword id="KW-0813">Transport</keyword>
<gene>
    <name type="primary">ENT6</name>
    <name type="ordered locus">At4g05110</name>
    <name type="ORF">C17L7.30</name>
    <name type="ORF">T32N4</name>
</gene>
<proteinExistence type="evidence at protein level"/>
<name>ENT6_ARATH</name>
<feature type="chain" id="PRO_0000419159" description="Equilibrative nucleotide transporter 6">
    <location>
        <begin position="1"/>
        <end position="418"/>
    </location>
</feature>
<feature type="transmembrane region" description="Helical" evidence="1">
    <location>
        <begin position="19"/>
        <end position="39"/>
    </location>
</feature>
<feature type="transmembrane region" description="Helical" evidence="1">
    <location>
        <begin position="56"/>
        <end position="76"/>
    </location>
</feature>
<feature type="transmembrane region" description="Helical" evidence="1">
    <location>
        <begin position="86"/>
        <end position="106"/>
    </location>
</feature>
<feature type="transmembrane region" description="Helical" evidence="1">
    <location>
        <begin position="112"/>
        <end position="132"/>
    </location>
</feature>
<feature type="transmembrane region" description="Helical" evidence="1">
    <location>
        <begin position="142"/>
        <end position="162"/>
    </location>
</feature>
<feature type="transmembrane region" description="Helical" evidence="1">
    <location>
        <begin position="186"/>
        <end position="206"/>
    </location>
</feature>
<feature type="transmembrane region" description="Helical" evidence="1">
    <location>
        <begin position="264"/>
        <end position="284"/>
    </location>
</feature>
<feature type="transmembrane region" description="Helical" evidence="1">
    <location>
        <begin position="291"/>
        <end position="311"/>
    </location>
</feature>
<feature type="transmembrane region" description="Helical" evidence="1">
    <location>
        <begin position="326"/>
        <end position="346"/>
    </location>
</feature>
<feature type="transmembrane region" description="Helical" evidence="1">
    <location>
        <begin position="353"/>
        <end position="373"/>
    </location>
</feature>
<feature type="transmembrane region" description="Helical" evidence="1">
    <location>
        <begin position="392"/>
        <end position="412"/>
    </location>
</feature>